<accession>B9MDK8</accession>
<reference key="1">
    <citation type="submission" date="2009-01" db="EMBL/GenBank/DDBJ databases">
        <title>Complete sequence of Diaphorobacter sp. TPSY.</title>
        <authorList>
            <consortium name="US DOE Joint Genome Institute"/>
            <person name="Lucas S."/>
            <person name="Copeland A."/>
            <person name="Lapidus A."/>
            <person name="Glavina del Rio T."/>
            <person name="Tice H."/>
            <person name="Bruce D."/>
            <person name="Goodwin L."/>
            <person name="Pitluck S."/>
            <person name="Chertkov O."/>
            <person name="Brettin T."/>
            <person name="Detter J.C."/>
            <person name="Han C."/>
            <person name="Larimer F."/>
            <person name="Land M."/>
            <person name="Hauser L."/>
            <person name="Kyrpides N."/>
            <person name="Mikhailova N."/>
            <person name="Coates J.D."/>
        </authorList>
    </citation>
    <scope>NUCLEOTIDE SEQUENCE [LARGE SCALE GENOMIC DNA]</scope>
    <source>
        <strain>TPSY</strain>
    </source>
</reference>
<dbReference type="EC" id="4.2.1.33" evidence="1"/>
<dbReference type="EMBL" id="CP001392">
    <property type="protein sequence ID" value="ACM34017.1"/>
    <property type="molecule type" value="Genomic_DNA"/>
</dbReference>
<dbReference type="RefSeq" id="WP_015913939.1">
    <property type="nucleotide sequence ID" value="NC_011992.1"/>
</dbReference>
<dbReference type="SMR" id="B9MDK8"/>
<dbReference type="KEGG" id="dia:Dtpsy_2582"/>
<dbReference type="eggNOG" id="COG0065">
    <property type="taxonomic scope" value="Bacteria"/>
</dbReference>
<dbReference type="HOGENOM" id="CLU_006714_3_4_4"/>
<dbReference type="UniPathway" id="UPA00048">
    <property type="reaction ID" value="UER00071"/>
</dbReference>
<dbReference type="Proteomes" id="UP000000450">
    <property type="component" value="Chromosome"/>
</dbReference>
<dbReference type="GO" id="GO:0003861">
    <property type="term" value="F:3-isopropylmalate dehydratase activity"/>
    <property type="evidence" value="ECO:0007669"/>
    <property type="project" value="UniProtKB-UniRule"/>
</dbReference>
<dbReference type="GO" id="GO:0051539">
    <property type="term" value="F:4 iron, 4 sulfur cluster binding"/>
    <property type="evidence" value="ECO:0007669"/>
    <property type="project" value="UniProtKB-KW"/>
</dbReference>
<dbReference type="GO" id="GO:0046872">
    <property type="term" value="F:metal ion binding"/>
    <property type="evidence" value="ECO:0007669"/>
    <property type="project" value="UniProtKB-KW"/>
</dbReference>
<dbReference type="GO" id="GO:0009098">
    <property type="term" value="P:L-leucine biosynthetic process"/>
    <property type="evidence" value="ECO:0007669"/>
    <property type="project" value="UniProtKB-UniRule"/>
</dbReference>
<dbReference type="CDD" id="cd01583">
    <property type="entry name" value="IPMI"/>
    <property type="match status" value="1"/>
</dbReference>
<dbReference type="FunFam" id="3.30.499.10:FF:000007">
    <property type="entry name" value="3-isopropylmalate dehydratase large subunit"/>
    <property type="match status" value="1"/>
</dbReference>
<dbReference type="Gene3D" id="3.30.499.10">
    <property type="entry name" value="Aconitase, domain 3"/>
    <property type="match status" value="2"/>
</dbReference>
<dbReference type="HAMAP" id="MF_01026">
    <property type="entry name" value="LeuC_type1"/>
    <property type="match status" value="1"/>
</dbReference>
<dbReference type="InterPro" id="IPR004430">
    <property type="entry name" value="3-IsopropMal_deHydase_lsu"/>
</dbReference>
<dbReference type="InterPro" id="IPR015931">
    <property type="entry name" value="Acnase/IPM_dHydase_lsu_aba_1/3"/>
</dbReference>
<dbReference type="InterPro" id="IPR001030">
    <property type="entry name" value="Acoase/IPM_deHydtase_lsu_aba"/>
</dbReference>
<dbReference type="InterPro" id="IPR018136">
    <property type="entry name" value="Aconitase_4Fe-4S_BS"/>
</dbReference>
<dbReference type="InterPro" id="IPR036008">
    <property type="entry name" value="Aconitase_4Fe-4S_dom"/>
</dbReference>
<dbReference type="InterPro" id="IPR050067">
    <property type="entry name" value="IPM_dehydratase_rel_enz"/>
</dbReference>
<dbReference type="InterPro" id="IPR033941">
    <property type="entry name" value="IPMI_cat"/>
</dbReference>
<dbReference type="NCBIfam" id="TIGR00170">
    <property type="entry name" value="leuC"/>
    <property type="match status" value="1"/>
</dbReference>
<dbReference type="NCBIfam" id="NF004016">
    <property type="entry name" value="PRK05478.1"/>
    <property type="match status" value="1"/>
</dbReference>
<dbReference type="NCBIfam" id="NF009116">
    <property type="entry name" value="PRK12466.1"/>
    <property type="match status" value="1"/>
</dbReference>
<dbReference type="PANTHER" id="PTHR43822:SF9">
    <property type="entry name" value="3-ISOPROPYLMALATE DEHYDRATASE"/>
    <property type="match status" value="1"/>
</dbReference>
<dbReference type="PANTHER" id="PTHR43822">
    <property type="entry name" value="HOMOACONITASE, MITOCHONDRIAL-RELATED"/>
    <property type="match status" value="1"/>
</dbReference>
<dbReference type="Pfam" id="PF00330">
    <property type="entry name" value="Aconitase"/>
    <property type="match status" value="1"/>
</dbReference>
<dbReference type="PRINTS" id="PR00415">
    <property type="entry name" value="ACONITASE"/>
</dbReference>
<dbReference type="SUPFAM" id="SSF53732">
    <property type="entry name" value="Aconitase iron-sulfur domain"/>
    <property type="match status" value="1"/>
</dbReference>
<dbReference type="PROSITE" id="PS00450">
    <property type="entry name" value="ACONITASE_1"/>
    <property type="match status" value="1"/>
</dbReference>
<dbReference type="PROSITE" id="PS01244">
    <property type="entry name" value="ACONITASE_2"/>
    <property type="match status" value="1"/>
</dbReference>
<comment type="function">
    <text evidence="1">Catalyzes the isomerization between 2-isopropylmalate and 3-isopropylmalate, via the formation of 2-isopropylmaleate.</text>
</comment>
<comment type="catalytic activity">
    <reaction evidence="1">
        <text>(2R,3S)-3-isopropylmalate = (2S)-2-isopropylmalate</text>
        <dbReference type="Rhea" id="RHEA:32287"/>
        <dbReference type="ChEBI" id="CHEBI:1178"/>
        <dbReference type="ChEBI" id="CHEBI:35121"/>
        <dbReference type="EC" id="4.2.1.33"/>
    </reaction>
</comment>
<comment type="cofactor">
    <cofactor evidence="1">
        <name>[4Fe-4S] cluster</name>
        <dbReference type="ChEBI" id="CHEBI:49883"/>
    </cofactor>
    <text evidence="1">Binds 1 [4Fe-4S] cluster per subunit.</text>
</comment>
<comment type="pathway">
    <text evidence="1">Amino-acid biosynthesis; L-leucine biosynthesis; L-leucine from 3-methyl-2-oxobutanoate: step 2/4.</text>
</comment>
<comment type="subunit">
    <text evidence="1">Heterodimer of LeuC and LeuD.</text>
</comment>
<comment type="similarity">
    <text evidence="1">Belongs to the aconitase/IPM isomerase family. LeuC type 1 subfamily.</text>
</comment>
<keyword id="KW-0004">4Fe-4S</keyword>
<keyword id="KW-0028">Amino-acid biosynthesis</keyword>
<keyword id="KW-0100">Branched-chain amino acid biosynthesis</keyword>
<keyword id="KW-0408">Iron</keyword>
<keyword id="KW-0411">Iron-sulfur</keyword>
<keyword id="KW-0432">Leucine biosynthesis</keyword>
<keyword id="KW-0456">Lyase</keyword>
<keyword id="KW-0479">Metal-binding</keyword>
<keyword id="KW-1185">Reference proteome</keyword>
<proteinExistence type="inferred from homology"/>
<sequence>MGRTLYDKIFDEHVVHTEEDGTAVLYIDRHLVHEVTSPQAFEGLREAGRKVWRVSSIVATADHNTPTTGWERGYDGIADPISKEQIVTLDKNIQESGAAAFFPFLSKRQGIVHVIGPENGATLPGMTVVCGDSHTSTHGAFGALAHGIGTSEVEHVMATQTLLAKKAKNMLVQVNGKVAPGITAKDIVLAIIGKIGTAGGTGYTIEFAGEAIRDLSMEGRMTVCNMAIEAGARAGLVAVDDKTINYVKGRPLAPTGVEWDQAVAYWKTLHSDADAKFDAVVELNAAEIVPQVTWGTSPEMVLGIDAVVPDPDKEKDPSKRGAIERALTYMGLQPGKPMDDIFVDKVFIGSCTNSRIEDMREAAAVVKKLGQKVAKNIKLAMVVPGSGLVKEQAEREGLDAIFKAAGFEWREPGCSMCLAMNADRLEPGERCASTSNRNFEGRQGAGGRTHLVSPAMAAAAAIHGHFVDIRQFA</sequence>
<gene>
    <name evidence="1" type="primary">leuC</name>
    <name type="ordered locus">Dtpsy_2582</name>
</gene>
<protein>
    <recommendedName>
        <fullName evidence="1">3-isopropylmalate dehydratase large subunit</fullName>
        <ecNumber evidence="1">4.2.1.33</ecNumber>
    </recommendedName>
    <alternativeName>
        <fullName evidence="1">Alpha-IPM isomerase</fullName>
        <shortName evidence="1">IPMI</shortName>
    </alternativeName>
    <alternativeName>
        <fullName evidence="1">Isopropylmalate isomerase</fullName>
    </alternativeName>
</protein>
<feature type="chain" id="PRO_1000149360" description="3-isopropylmalate dehydratase large subunit">
    <location>
        <begin position="1"/>
        <end position="473"/>
    </location>
</feature>
<feature type="binding site" evidence="1">
    <location>
        <position position="351"/>
    </location>
    <ligand>
        <name>[4Fe-4S] cluster</name>
        <dbReference type="ChEBI" id="CHEBI:49883"/>
    </ligand>
</feature>
<feature type="binding site" evidence="1">
    <location>
        <position position="414"/>
    </location>
    <ligand>
        <name>[4Fe-4S] cluster</name>
        <dbReference type="ChEBI" id="CHEBI:49883"/>
    </ligand>
</feature>
<feature type="binding site" evidence="1">
    <location>
        <position position="417"/>
    </location>
    <ligand>
        <name>[4Fe-4S] cluster</name>
        <dbReference type="ChEBI" id="CHEBI:49883"/>
    </ligand>
</feature>
<organism>
    <name type="scientific">Acidovorax ebreus (strain TPSY)</name>
    <name type="common">Diaphorobacter sp. (strain TPSY)</name>
    <dbReference type="NCBI Taxonomy" id="535289"/>
    <lineage>
        <taxon>Bacteria</taxon>
        <taxon>Pseudomonadati</taxon>
        <taxon>Pseudomonadota</taxon>
        <taxon>Betaproteobacteria</taxon>
        <taxon>Burkholderiales</taxon>
        <taxon>Comamonadaceae</taxon>
        <taxon>Diaphorobacter</taxon>
    </lineage>
</organism>
<name>LEUC_ACIET</name>
<evidence type="ECO:0000255" key="1">
    <source>
        <dbReference type="HAMAP-Rule" id="MF_01026"/>
    </source>
</evidence>